<dbReference type="EC" id="4.2.3.5" evidence="2"/>
<dbReference type="EMBL" id="CP000243">
    <property type="protein sequence ID" value="ABE08081.1"/>
    <property type="status" value="ALT_INIT"/>
    <property type="molecule type" value="Genomic_DNA"/>
</dbReference>
<dbReference type="RefSeq" id="WP_001331783.1">
    <property type="nucleotide sequence ID" value="NZ_CP064825.1"/>
</dbReference>
<dbReference type="SMR" id="Q1R983"/>
<dbReference type="KEGG" id="eci:UTI89_C2614"/>
<dbReference type="HOGENOM" id="CLU_034547_0_2_6"/>
<dbReference type="UniPathway" id="UPA00053">
    <property type="reaction ID" value="UER00090"/>
</dbReference>
<dbReference type="Proteomes" id="UP000001952">
    <property type="component" value="Chromosome"/>
</dbReference>
<dbReference type="GO" id="GO:0005829">
    <property type="term" value="C:cytosol"/>
    <property type="evidence" value="ECO:0007669"/>
    <property type="project" value="TreeGrafter"/>
</dbReference>
<dbReference type="GO" id="GO:0004107">
    <property type="term" value="F:chorismate synthase activity"/>
    <property type="evidence" value="ECO:0007669"/>
    <property type="project" value="UniProtKB-UniRule"/>
</dbReference>
<dbReference type="GO" id="GO:0010181">
    <property type="term" value="F:FMN binding"/>
    <property type="evidence" value="ECO:0007669"/>
    <property type="project" value="TreeGrafter"/>
</dbReference>
<dbReference type="GO" id="GO:0008652">
    <property type="term" value="P:amino acid biosynthetic process"/>
    <property type="evidence" value="ECO:0007669"/>
    <property type="project" value="UniProtKB-KW"/>
</dbReference>
<dbReference type="GO" id="GO:0009073">
    <property type="term" value="P:aromatic amino acid family biosynthetic process"/>
    <property type="evidence" value="ECO:0007669"/>
    <property type="project" value="UniProtKB-KW"/>
</dbReference>
<dbReference type="GO" id="GO:0009423">
    <property type="term" value="P:chorismate biosynthetic process"/>
    <property type="evidence" value="ECO:0007669"/>
    <property type="project" value="UniProtKB-UniRule"/>
</dbReference>
<dbReference type="CDD" id="cd07304">
    <property type="entry name" value="Chorismate_synthase"/>
    <property type="match status" value="1"/>
</dbReference>
<dbReference type="FunFam" id="3.60.150.10:FF:000001">
    <property type="entry name" value="Chorismate synthase"/>
    <property type="match status" value="1"/>
</dbReference>
<dbReference type="Gene3D" id="3.60.150.10">
    <property type="entry name" value="Chorismate synthase AroC"/>
    <property type="match status" value="1"/>
</dbReference>
<dbReference type="HAMAP" id="MF_00300">
    <property type="entry name" value="Chorismate_synth"/>
    <property type="match status" value="1"/>
</dbReference>
<dbReference type="InterPro" id="IPR000453">
    <property type="entry name" value="Chorismate_synth"/>
</dbReference>
<dbReference type="InterPro" id="IPR035904">
    <property type="entry name" value="Chorismate_synth_AroC_sf"/>
</dbReference>
<dbReference type="InterPro" id="IPR020541">
    <property type="entry name" value="Chorismate_synthase_CS"/>
</dbReference>
<dbReference type="NCBIfam" id="TIGR00033">
    <property type="entry name" value="aroC"/>
    <property type="match status" value="1"/>
</dbReference>
<dbReference type="NCBIfam" id="NF003793">
    <property type="entry name" value="PRK05382.1"/>
    <property type="match status" value="1"/>
</dbReference>
<dbReference type="PANTHER" id="PTHR21085">
    <property type="entry name" value="CHORISMATE SYNTHASE"/>
    <property type="match status" value="1"/>
</dbReference>
<dbReference type="PANTHER" id="PTHR21085:SF0">
    <property type="entry name" value="CHORISMATE SYNTHASE"/>
    <property type="match status" value="1"/>
</dbReference>
<dbReference type="Pfam" id="PF01264">
    <property type="entry name" value="Chorismate_synt"/>
    <property type="match status" value="1"/>
</dbReference>
<dbReference type="PIRSF" id="PIRSF001456">
    <property type="entry name" value="Chorismate_synth"/>
    <property type="match status" value="1"/>
</dbReference>
<dbReference type="SUPFAM" id="SSF103263">
    <property type="entry name" value="Chorismate synthase, AroC"/>
    <property type="match status" value="1"/>
</dbReference>
<dbReference type="PROSITE" id="PS00787">
    <property type="entry name" value="CHORISMATE_SYNTHASE_1"/>
    <property type="match status" value="1"/>
</dbReference>
<dbReference type="PROSITE" id="PS00788">
    <property type="entry name" value="CHORISMATE_SYNTHASE_2"/>
    <property type="match status" value="1"/>
</dbReference>
<dbReference type="PROSITE" id="PS00789">
    <property type="entry name" value="CHORISMATE_SYNTHASE_3"/>
    <property type="match status" value="1"/>
</dbReference>
<keyword id="KW-0028">Amino-acid biosynthesis</keyword>
<keyword id="KW-0057">Aromatic amino acid biosynthesis</keyword>
<keyword id="KW-0274">FAD</keyword>
<keyword id="KW-0285">Flavoprotein</keyword>
<keyword id="KW-0288">FMN</keyword>
<keyword id="KW-0456">Lyase</keyword>
<keyword id="KW-0521">NADP</keyword>
<reference key="1">
    <citation type="journal article" date="2006" name="Proc. Natl. Acad. Sci. U.S.A.">
        <title>Identification of genes subject to positive selection in uropathogenic strains of Escherichia coli: a comparative genomics approach.</title>
        <authorList>
            <person name="Chen S.L."/>
            <person name="Hung C.-S."/>
            <person name="Xu J."/>
            <person name="Reigstad C.S."/>
            <person name="Magrini V."/>
            <person name="Sabo A."/>
            <person name="Blasiar D."/>
            <person name="Bieri T."/>
            <person name="Meyer R.R."/>
            <person name="Ozersky P."/>
            <person name="Armstrong J.R."/>
            <person name="Fulton R.S."/>
            <person name="Latreille J.P."/>
            <person name="Spieth J."/>
            <person name="Hooton T.M."/>
            <person name="Mardis E.R."/>
            <person name="Hultgren S.J."/>
            <person name="Gordon J.I."/>
        </authorList>
    </citation>
    <scope>NUCLEOTIDE SEQUENCE [LARGE SCALE GENOMIC DNA]</scope>
    <source>
        <strain>UTI89 / UPEC</strain>
    </source>
</reference>
<proteinExistence type="inferred from homology"/>
<organism>
    <name type="scientific">Escherichia coli (strain UTI89 / UPEC)</name>
    <dbReference type="NCBI Taxonomy" id="364106"/>
    <lineage>
        <taxon>Bacteria</taxon>
        <taxon>Pseudomonadati</taxon>
        <taxon>Pseudomonadota</taxon>
        <taxon>Gammaproteobacteria</taxon>
        <taxon>Enterobacterales</taxon>
        <taxon>Enterobacteriaceae</taxon>
        <taxon>Escherichia</taxon>
    </lineage>
</organism>
<name>AROC_ECOUT</name>
<evidence type="ECO:0000250" key="1"/>
<evidence type="ECO:0000255" key="2">
    <source>
        <dbReference type="HAMAP-Rule" id="MF_00300"/>
    </source>
</evidence>
<evidence type="ECO:0000305" key="3"/>
<feature type="initiator methionine" description="Removed" evidence="1">
    <location>
        <position position="1"/>
    </location>
</feature>
<feature type="chain" id="PRO_0000256292" description="Chorismate synthase">
    <location>
        <begin position="2"/>
        <end position="361"/>
    </location>
</feature>
<feature type="binding site" evidence="2">
    <location>
        <position position="48"/>
    </location>
    <ligand>
        <name>NADP(+)</name>
        <dbReference type="ChEBI" id="CHEBI:58349"/>
    </ligand>
</feature>
<feature type="binding site" evidence="2">
    <location>
        <position position="54"/>
    </location>
    <ligand>
        <name>NADP(+)</name>
        <dbReference type="ChEBI" id="CHEBI:58349"/>
    </ligand>
</feature>
<feature type="binding site" evidence="2">
    <location>
        <begin position="125"/>
        <end position="127"/>
    </location>
    <ligand>
        <name>FMN</name>
        <dbReference type="ChEBI" id="CHEBI:58210"/>
    </ligand>
</feature>
<feature type="binding site" evidence="2">
    <location>
        <begin position="238"/>
        <end position="239"/>
    </location>
    <ligand>
        <name>FMN</name>
        <dbReference type="ChEBI" id="CHEBI:58210"/>
    </ligand>
</feature>
<feature type="binding site" evidence="2">
    <location>
        <position position="278"/>
    </location>
    <ligand>
        <name>FMN</name>
        <dbReference type="ChEBI" id="CHEBI:58210"/>
    </ligand>
</feature>
<feature type="binding site" evidence="2">
    <location>
        <begin position="293"/>
        <end position="297"/>
    </location>
    <ligand>
        <name>FMN</name>
        <dbReference type="ChEBI" id="CHEBI:58210"/>
    </ligand>
</feature>
<feature type="binding site" evidence="2">
    <location>
        <position position="319"/>
    </location>
    <ligand>
        <name>FMN</name>
        <dbReference type="ChEBI" id="CHEBI:58210"/>
    </ligand>
</feature>
<gene>
    <name evidence="2" type="primary">aroC</name>
    <name type="ordered locus">UTI89_C2614</name>
</gene>
<sequence>MAGNTIGQLFRVTTFGESHGLALGCIVDGVPPGIPLTEADLQHDLDRRRPGTSRYTTQRREPDQVKILSGVFEGVTTGTSIGLLIENTDQRSQDYSAIKDVFRPGHADYTYEQKYGLRDYRGGGRSSARETAMRVAAGAIAKKYLAEKFGIEIRGCLTQMGDIPLEIKDWSQVEQNPFFCPDPDKIDALDELMRALKKEGDSIGAKVTVVASGVPAGLGEPVFDRLDADIAHALMSINAVKGVEIGDGFDVVALRGSQNRDEITKDGFQSNHAGGILGGISSGQKIIAHMALKPTSSITVPGRTINRFGEEVEMITKGRHDPCVGIRAVPIAEAMLAIVLMDHLLRQRAQNADVKTDIPRW</sequence>
<comment type="function">
    <text evidence="2">Catalyzes the anti-1,4-elimination of the C-3 phosphate and the C-6 proR hydrogen from 5-enolpyruvylshikimate-3-phosphate (EPSP) to yield chorismate, which is the branch point compound that serves as the starting substrate for the three terminal pathways of aromatic amino acid biosynthesis. This reaction introduces a second double bond into the aromatic ring system.</text>
</comment>
<comment type="catalytic activity">
    <reaction evidence="2">
        <text>5-O-(1-carboxyvinyl)-3-phosphoshikimate = chorismate + phosphate</text>
        <dbReference type="Rhea" id="RHEA:21020"/>
        <dbReference type="ChEBI" id="CHEBI:29748"/>
        <dbReference type="ChEBI" id="CHEBI:43474"/>
        <dbReference type="ChEBI" id="CHEBI:57701"/>
        <dbReference type="EC" id="4.2.3.5"/>
    </reaction>
</comment>
<comment type="cofactor">
    <cofactor evidence="2">
        <name>FMNH2</name>
        <dbReference type="ChEBI" id="CHEBI:57618"/>
    </cofactor>
    <text evidence="2">Reduced FMN (FMNH(2)).</text>
</comment>
<comment type="pathway">
    <text evidence="2">Metabolic intermediate biosynthesis; chorismate biosynthesis; chorismate from D-erythrose 4-phosphate and phosphoenolpyruvate: step 7/7.</text>
</comment>
<comment type="subunit">
    <text evidence="2">Homotetramer.</text>
</comment>
<comment type="similarity">
    <text evidence="2">Belongs to the chorismate synthase family.</text>
</comment>
<comment type="sequence caution" evidence="3">
    <conflict type="erroneous initiation">
        <sequence resource="EMBL-CDS" id="ABE08081"/>
    </conflict>
    <text>Extended N-terminus.</text>
</comment>
<accession>Q1R983</accession>
<protein>
    <recommendedName>
        <fullName evidence="2">Chorismate synthase</fullName>
        <shortName evidence="2">CS</shortName>
        <ecNumber evidence="2">4.2.3.5</ecNumber>
    </recommendedName>
    <alternativeName>
        <fullName evidence="2">5-enolpyruvylshikimate-3-phosphate phospholyase</fullName>
    </alternativeName>
</protein>